<keyword id="KW-0024">Alternative initiation</keyword>
<keyword id="KW-1035">Host cytoplasm</keyword>
<keyword id="KW-0945">Host-virus interaction</keyword>
<keyword id="KW-1090">Inhibition of host innate immune response by virus</keyword>
<keyword id="KW-1114">Inhibition of host interferon signaling pathway by virus</keyword>
<keyword id="KW-1105">Inhibition of host STAT1 by virus</keyword>
<keyword id="KW-1106">Inhibition of host STAT2 by virus</keyword>
<keyword id="KW-0922">Interferon antiviral system evasion</keyword>
<keyword id="KW-1185">Reference proteome</keyword>
<keyword id="KW-0899">Viral immunoevasion</keyword>
<reference key="1">
    <citation type="journal article" date="1997" name="J. Gen. Virol.">
        <title>Isolation of an avirulent mutant of Sendai virus with two amino acid mutations from a highly virulent field strain through adaptation to LLC-MK2 cells.</title>
        <authorList>
            <person name="Itoh M."/>
            <person name="Isegawa Y."/>
            <person name="Hotta H."/>
            <person name="Homma M."/>
        </authorList>
    </citation>
    <scope>NUCLEOTIDE SEQUENCE [GENOMIC RNA]</scope>
    <source>
        <strain>Isolate MVC11</strain>
    </source>
</reference>
<organism>
    <name type="scientific">Sendai virus (strain Ohita)</name>
    <name type="common">SeV</name>
    <dbReference type="NCBI Taxonomy" id="302272"/>
    <lineage>
        <taxon>Viruses</taxon>
        <taxon>Riboviria</taxon>
        <taxon>Orthornavirae</taxon>
        <taxon>Negarnaviricota</taxon>
        <taxon>Haploviricotina</taxon>
        <taxon>Monjiviricetes</taxon>
        <taxon>Mononegavirales</taxon>
        <taxon>Paramyxoviridae</taxon>
        <taxon>Feraresvirinae</taxon>
        <taxon>Respirovirus</taxon>
        <taxon>Respirovirus muris</taxon>
    </lineage>
</organism>
<feature type="initiator methionine" description="Removed; by host" evidence="1">
    <location>
        <position position="1"/>
    </location>
</feature>
<feature type="chain" id="PRO_0000039408" description="Protein C'">
    <location>
        <begin position="2"/>
        <end position="215"/>
    </location>
</feature>
<feature type="region of interest" description="Disordered" evidence="2">
    <location>
        <begin position="12"/>
        <end position="34"/>
    </location>
</feature>
<feature type="region of interest" description="Involved in self-degradation and in host STAT1 degradation" evidence="2">
    <location>
        <begin position="15"/>
        <end position="22"/>
    </location>
</feature>
<feature type="compositionally biased region" description="Basic and acidic residues" evidence="4">
    <location>
        <begin position="25"/>
        <end position="35"/>
    </location>
</feature>
<feature type="compositionally biased region" description="Polar residues" evidence="4">
    <location>
        <begin position="36"/>
        <end position="66"/>
    </location>
</feature>
<feature type="splice variant" id="VSP_018943" description="In isoform Y1." evidence="5">
    <location>
        <begin position="1"/>
        <end position="34"/>
    </location>
</feature>
<feature type="splice variant" id="VSP_018942" description="In isoform C." evidence="5">
    <location>
        <begin position="1"/>
        <end position="11"/>
    </location>
</feature>
<feature type="sequence variant" description="In strain: Isolate MVC11; avirulent mutant.">
    <original>F</original>
    <variation>S</variation>
    <location>
        <position position="181"/>
    </location>
</feature>
<protein>
    <recommendedName>
        <fullName>Protein C'</fullName>
    </recommendedName>
</protein>
<proteinExistence type="inferred from homology"/>
<dbReference type="EMBL" id="AB005795">
    <property type="protein sequence ID" value="BAA24385.1"/>
    <property type="molecule type" value="Genomic_RNA"/>
</dbReference>
<dbReference type="EMBL" id="AB005795">
    <property type="protein sequence ID" value="BAA24387.1"/>
    <property type="molecule type" value="Genomic_RNA"/>
</dbReference>
<dbReference type="EMBL" id="AB005795">
    <property type="protein sequence ID" value="BAA24388.1"/>
    <property type="molecule type" value="Genomic_RNA"/>
</dbReference>
<dbReference type="EMBL" id="AB005796">
    <property type="protein sequence ID" value="BAA24394.1"/>
    <property type="molecule type" value="Genomic_RNA"/>
</dbReference>
<dbReference type="EMBL" id="AB005796">
    <property type="protein sequence ID" value="BAA24396.1"/>
    <property type="molecule type" value="Genomic_RNA"/>
</dbReference>
<dbReference type="EMBL" id="AB005796">
    <property type="protein sequence ID" value="BAA24397.1"/>
    <property type="molecule type" value="Genomic_RNA"/>
</dbReference>
<dbReference type="SMR" id="O55527"/>
<dbReference type="KEGG" id="vg:1489773"/>
<dbReference type="KEGG" id="vg:1489774"/>
<dbReference type="KEGG" id="vg:1489781"/>
<dbReference type="Proteomes" id="UP000006563">
    <property type="component" value="Genome"/>
</dbReference>
<dbReference type="Proteomes" id="UP000007311">
    <property type="component" value="Segment"/>
</dbReference>
<dbReference type="GO" id="GO:0030430">
    <property type="term" value="C:host cell cytoplasm"/>
    <property type="evidence" value="ECO:0007669"/>
    <property type="project" value="UniProtKB-SubCell"/>
</dbReference>
<dbReference type="GO" id="GO:0052170">
    <property type="term" value="P:symbiont-mediated suppression of host innate immune response"/>
    <property type="evidence" value="ECO:0007669"/>
    <property type="project" value="UniProtKB-KW"/>
</dbReference>
<dbReference type="GO" id="GO:0039563">
    <property type="term" value="P:symbiont-mediated suppression of host JAK-STAT cascade via inhibition of STAT1 activity"/>
    <property type="evidence" value="ECO:0000250"/>
    <property type="project" value="UniProtKB"/>
</dbReference>
<dbReference type="GO" id="GO:0039564">
    <property type="term" value="P:symbiont-mediated suppression of host JAK-STAT cascade via inhibition of STAT2 activity"/>
    <property type="evidence" value="ECO:0007669"/>
    <property type="project" value="UniProtKB-KW"/>
</dbReference>
<dbReference type="GO" id="GO:0039502">
    <property type="term" value="P:symbiont-mediated suppression of host type I interferon-mediated signaling pathway"/>
    <property type="evidence" value="ECO:0007669"/>
    <property type="project" value="UniProtKB-KW"/>
</dbReference>
<dbReference type="InterPro" id="IPR002608">
    <property type="entry name" value="Paramyxo_C"/>
</dbReference>
<dbReference type="Pfam" id="PF01692">
    <property type="entry name" value="Paramyxo_C"/>
    <property type="match status" value="1"/>
</dbReference>
<gene>
    <name type="primary">P/V/C</name>
</gene>
<name>C_SENDO</name>
<sequence>MASATLPAWIKMPSFLKKILKLRGRRQEDESRSRMLSDSSTQSYQVNQLTSEGTEAGSTIPSTPSKGQALPTESKVRAREKSRHRRPKIIDQVRRVESLGEQASQRQKHMLETLINKIYTGPLGEELVQTLYLRIWAMEETPESLKILQMREDIRDQVLKMKTERWLRTLIRGEKTKLKDFQKRYEEVHPYLMKEKVEQIIMEEAWSLAAHIVQE</sequence>
<comment type="function">
    <text evidence="3">The different products prevent the establishment of cellular antiviral state by blocking the interferon-alpha/beta (IFN-alpha/beta) and IFN-gamma signaling pathways. They inhibit IFN-alpha/beta induced tyrosine phosphorylation of STAT1 and STAT2. Blocking the IFN-alpha/beta pathway requires binding to STAT1 in the cytoplasm. They inhibit IFN-gamma induced serine phosphorylation of STAT1. Block the IFN-gamma pathway by binding to and stabilizing the parallel form of the STAT1 dimer, further inducing high-molecular-weight complex formation and inhibition of transcription by IFN-gamma. May also have a role in preventing the cell to enter apoptosis. Modulate regulation of viral transcription and replication. Overexpression inhibits the viral RNA polymerase. The absence of all C', C and Y1 proteins leads to viral delayed growth. Plays an important role in virion particles release. Modulates virion shape.</text>
</comment>
<comment type="subunit">
    <text evidence="3">The different isoforms interact (via C-terminus) with unphosphorylated and phosphorylated human STAT1 (via N-terminus), favoring the formation of parallel STAT1 homodimers. The different isoforms do not interact with host STAT2. C protein interacts with L protein; this interaction has an inhibitory effect on viral transcription and replication.</text>
</comment>
<comment type="subcellular location">
    <subcellularLocation>
        <location evidence="3">Host cytoplasm</location>
    </subcellularLocation>
    <text evidence="3">Protein C' seems to localize around the Golgi.</text>
</comment>
<comment type="alternative products">
    <event type="alternative initiation"/>
    <isoform>
        <id>O55527-1</id>
        <name>C'</name>
        <sequence type="displayed"/>
    </isoform>
    <isoform>
        <id>O55527-2</id>
        <name>C</name>
        <sequence type="described" ref="VSP_018942"/>
    </isoform>
    <isoform>
        <id>O55527-3</id>
        <name>Y1</name>
        <sequence type="described" ref="VSP_018943"/>
    </isoform>
</comment>
<comment type="domain">
    <text evidence="2">The disordered region at the N-terminus is involved in C protein self-degradation in trans. This self-degradation of C protein may play a role in the regulation of viral RNA synthesis. The disordered region at the N-terminus is also involved in the host STAT1 degradation in order to counteract the host innate antiviral response.</text>
</comment>
<comment type="PTM">
    <text evidence="2">Protein Y1 is produced not only by alternative initiation, but also by proteolytic cleavage of C'. Only alternative initiation is detected in vitro, whereas in vivo cleavage seems to be predominant.</text>
</comment>
<comment type="miscellaneous">
    <text evidence="3">The C protein is found in virion at a ratio of approximately 40 molecules per virion, presumably associated with the nucleocapsid.</text>
</comment>
<comment type="miscellaneous">
    <text evidence="5">The P/V/C gene has two overlapping open reading frames. One encodes the P/V/W proteins and the other the C/Y proteins.</text>
</comment>
<comment type="miscellaneous">
    <molecule>Isoform C'</molecule>
    <text>The initiator methionine is coded by an unusual start codon ACG.</text>
</comment>
<comment type="miscellaneous">
    <molecule>Isoform C</molecule>
    <text evidence="5">Most abundant isoform in infected cells.</text>
</comment>
<comment type="similarity">
    <text evidence="5">Belongs to the respirovirus protein C family.</text>
</comment>
<comment type="caution">
    <text evidence="5">The C' protein uses an unusual ACG start codon.</text>
</comment>
<organismHost>
    <name type="scientific">Cavia cutleri</name>
    <name type="common">Guinea pig</name>
    <dbReference type="NCBI Taxonomy" id="10144"/>
</organismHost>
<organismHost>
    <name type="scientific">Cricetidae sp.</name>
    <name type="common">Hamster</name>
    <dbReference type="NCBI Taxonomy" id="36483"/>
</organismHost>
<organismHost>
    <name type="scientific">Mus musculus</name>
    <name type="common">Mouse</name>
    <dbReference type="NCBI Taxonomy" id="10090"/>
</organismHost>
<organismHost>
    <name type="scientific">Rattus norvegicus</name>
    <name type="common">Rat</name>
    <dbReference type="NCBI Taxonomy" id="10116"/>
</organismHost>
<evidence type="ECO:0000250" key="1"/>
<evidence type="ECO:0000250" key="2">
    <source>
        <dbReference type="UniProtKB" id="P04861"/>
    </source>
</evidence>
<evidence type="ECO:0000250" key="3">
    <source>
        <dbReference type="UniProtKB" id="P04862"/>
    </source>
</evidence>
<evidence type="ECO:0000256" key="4">
    <source>
        <dbReference type="SAM" id="MobiDB-lite"/>
    </source>
</evidence>
<evidence type="ECO:0000305" key="5"/>
<accession>O55527</accession>
<accession>O55529</accession>
<accession>O92615</accession>
<accession>Q9WME0</accession>
<accession>Q9WME1</accession>
<accession>Q9WME2</accession>